<keyword id="KW-0002">3D-structure</keyword>
<keyword id="KW-0025">Alternative splicing</keyword>
<keyword id="KW-0131">Cell cycle</keyword>
<keyword id="KW-0132">Cell division</keyword>
<keyword id="KW-0137">Centromere</keyword>
<keyword id="KW-0158">Chromosome</keyword>
<keyword id="KW-0963">Cytoplasm</keyword>
<keyword id="KW-0206">Cytoskeleton</keyword>
<keyword id="KW-0995">Kinetochore</keyword>
<keyword id="KW-0493">Microtubule</keyword>
<keyword id="KW-0498">Mitosis</keyword>
<keyword id="KW-0597">Phosphoprotein</keyword>
<keyword id="KW-1267">Proteomics identification</keyword>
<keyword id="KW-1185">Reference proteome</keyword>
<organism>
    <name type="scientific">Homo sapiens</name>
    <name type="common">Human</name>
    <dbReference type="NCBI Taxonomy" id="9606"/>
    <lineage>
        <taxon>Eukaryota</taxon>
        <taxon>Metazoa</taxon>
        <taxon>Chordata</taxon>
        <taxon>Craniata</taxon>
        <taxon>Vertebrata</taxon>
        <taxon>Euteleostomi</taxon>
        <taxon>Mammalia</taxon>
        <taxon>Eutheria</taxon>
        <taxon>Euarchontoglires</taxon>
        <taxon>Primates</taxon>
        <taxon>Haplorrhini</taxon>
        <taxon>Catarrhini</taxon>
        <taxon>Hominidae</taxon>
        <taxon>Homo</taxon>
    </lineage>
</organism>
<gene>
    <name type="primary">SKA2</name>
    <name type="synonym">FAM33A</name>
</gene>
<evidence type="ECO:0000269" key="1">
    <source>
    </source>
</evidence>
<evidence type="ECO:0000269" key="2">
    <source>
    </source>
</evidence>
<evidence type="ECO:0000269" key="3">
    <source>
    </source>
</evidence>
<evidence type="ECO:0000303" key="4">
    <source>
    </source>
</evidence>
<evidence type="ECO:0000305" key="5"/>
<evidence type="ECO:0007744" key="6">
    <source>
    </source>
</evidence>
<evidence type="ECO:0007744" key="7">
    <source>
    </source>
</evidence>
<evidence type="ECO:0007829" key="8">
    <source>
        <dbReference type="PDB" id="4AJ5"/>
    </source>
</evidence>
<sequence>MEAEVDKLELMFQKAESDLDYIQYRLEYEIKTNHPDSASEKNPVTLLKELSVIKSRYQTLYARFKPVAVEQKESKSRICATVKKTMNMIQKLQKQTDLELSPLTKEEKTAAEQFKFHMPDL</sequence>
<reference key="1">
    <citation type="journal article" date="2004" name="Nat. Genet.">
        <title>Complete sequencing and characterization of 21,243 full-length human cDNAs.</title>
        <authorList>
            <person name="Ota T."/>
            <person name="Suzuki Y."/>
            <person name="Nishikawa T."/>
            <person name="Otsuki T."/>
            <person name="Sugiyama T."/>
            <person name="Irie R."/>
            <person name="Wakamatsu A."/>
            <person name="Hayashi K."/>
            <person name="Sato H."/>
            <person name="Nagai K."/>
            <person name="Kimura K."/>
            <person name="Makita H."/>
            <person name="Sekine M."/>
            <person name="Obayashi M."/>
            <person name="Nishi T."/>
            <person name="Shibahara T."/>
            <person name="Tanaka T."/>
            <person name="Ishii S."/>
            <person name="Yamamoto J."/>
            <person name="Saito K."/>
            <person name="Kawai Y."/>
            <person name="Isono Y."/>
            <person name="Nakamura Y."/>
            <person name="Nagahari K."/>
            <person name="Murakami K."/>
            <person name="Yasuda T."/>
            <person name="Iwayanagi T."/>
            <person name="Wagatsuma M."/>
            <person name="Shiratori A."/>
            <person name="Sudo H."/>
            <person name="Hosoiri T."/>
            <person name="Kaku Y."/>
            <person name="Kodaira H."/>
            <person name="Kondo H."/>
            <person name="Sugawara M."/>
            <person name="Takahashi M."/>
            <person name="Kanda K."/>
            <person name="Yokoi T."/>
            <person name="Furuya T."/>
            <person name="Kikkawa E."/>
            <person name="Omura Y."/>
            <person name="Abe K."/>
            <person name="Kamihara K."/>
            <person name="Katsuta N."/>
            <person name="Sato K."/>
            <person name="Tanikawa M."/>
            <person name="Yamazaki M."/>
            <person name="Ninomiya K."/>
            <person name="Ishibashi T."/>
            <person name="Yamashita H."/>
            <person name="Murakawa K."/>
            <person name="Fujimori K."/>
            <person name="Tanai H."/>
            <person name="Kimata M."/>
            <person name="Watanabe M."/>
            <person name="Hiraoka S."/>
            <person name="Chiba Y."/>
            <person name="Ishida S."/>
            <person name="Ono Y."/>
            <person name="Takiguchi S."/>
            <person name="Watanabe S."/>
            <person name="Yosida M."/>
            <person name="Hotuta T."/>
            <person name="Kusano J."/>
            <person name="Kanehori K."/>
            <person name="Takahashi-Fujii A."/>
            <person name="Hara H."/>
            <person name="Tanase T.-O."/>
            <person name="Nomura Y."/>
            <person name="Togiya S."/>
            <person name="Komai F."/>
            <person name="Hara R."/>
            <person name="Takeuchi K."/>
            <person name="Arita M."/>
            <person name="Imose N."/>
            <person name="Musashino K."/>
            <person name="Yuuki H."/>
            <person name="Oshima A."/>
            <person name="Sasaki N."/>
            <person name="Aotsuka S."/>
            <person name="Yoshikawa Y."/>
            <person name="Matsunawa H."/>
            <person name="Ichihara T."/>
            <person name="Shiohata N."/>
            <person name="Sano S."/>
            <person name="Moriya S."/>
            <person name="Momiyama H."/>
            <person name="Satoh N."/>
            <person name="Takami S."/>
            <person name="Terashima Y."/>
            <person name="Suzuki O."/>
            <person name="Nakagawa S."/>
            <person name="Senoh A."/>
            <person name="Mizoguchi H."/>
            <person name="Goto Y."/>
            <person name="Shimizu F."/>
            <person name="Wakebe H."/>
            <person name="Hishigaki H."/>
            <person name="Watanabe T."/>
            <person name="Sugiyama A."/>
            <person name="Takemoto M."/>
            <person name="Kawakami B."/>
            <person name="Yamazaki M."/>
            <person name="Watanabe K."/>
            <person name="Kumagai A."/>
            <person name="Itakura S."/>
            <person name="Fukuzumi Y."/>
            <person name="Fujimori Y."/>
            <person name="Komiyama M."/>
            <person name="Tashiro H."/>
            <person name="Tanigami A."/>
            <person name="Fujiwara T."/>
            <person name="Ono T."/>
            <person name="Yamada K."/>
            <person name="Fujii Y."/>
            <person name="Ozaki K."/>
            <person name="Hirao M."/>
            <person name="Ohmori Y."/>
            <person name="Kawabata A."/>
            <person name="Hikiji T."/>
            <person name="Kobatake N."/>
            <person name="Inagaki H."/>
            <person name="Ikema Y."/>
            <person name="Okamoto S."/>
            <person name="Okitani R."/>
            <person name="Kawakami T."/>
            <person name="Noguchi S."/>
            <person name="Itoh T."/>
            <person name="Shigeta K."/>
            <person name="Senba T."/>
            <person name="Matsumura K."/>
            <person name="Nakajima Y."/>
            <person name="Mizuno T."/>
            <person name="Morinaga M."/>
            <person name="Sasaki M."/>
            <person name="Togashi T."/>
            <person name="Oyama M."/>
            <person name="Hata H."/>
            <person name="Watanabe M."/>
            <person name="Komatsu T."/>
            <person name="Mizushima-Sugano J."/>
            <person name="Satoh T."/>
            <person name="Shirai Y."/>
            <person name="Takahashi Y."/>
            <person name="Nakagawa K."/>
            <person name="Okumura K."/>
            <person name="Nagase T."/>
            <person name="Nomura N."/>
            <person name="Kikuchi H."/>
            <person name="Masuho Y."/>
            <person name="Yamashita R."/>
            <person name="Nakai K."/>
            <person name="Yada T."/>
            <person name="Nakamura Y."/>
            <person name="Ohara O."/>
            <person name="Isogai T."/>
            <person name="Sugano S."/>
        </authorList>
    </citation>
    <scope>NUCLEOTIDE SEQUENCE [LARGE SCALE MRNA] (ISOFORM 1)</scope>
    <source>
        <tissue>Teratocarcinoma</tissue>
    </source>
</reference>
<reference key="2">
    <citation type="journal article" date="2006" name="Nature">
        <title>DNA sequence of human chromosome 17 and analysis of rearrangement in the human lineage.</title>
        <authorList>
            <person name="Zody M.C."/>
            <person name="Garber M."/>
            <person name="Adams D.J."/>
            <person name="Sharpe T."/>
            <person name="Harrow J."/>
            <person name="Lupski J.R."/>
            <person name="Nicholson C."/>
            <person name="Searle S.M."/>
            <person name="Wilming L."/>
            <person name="Young S.K."/>
            <person name="Abouelleil A."/>
            <person name="Allen N.R."/>
            <person name="Bi W."/>
            <person name="Bloom T."/>
            <person name="Borowsky M.L."/>
            <person name="Bugalter B.E."/>
            <person name="Butler J."/>
            <person name="Chang J.L."/>
            <person name="Chen C.-K."/>
            <person name="Cook A."/>
            <person name="Corum B."/>
            <person name="Cuomo C.A."/>
            <person name="de Jong P.J."/>
            <person name="DeCaprio D."/>
            <person name="Dewar K."/>
            <person name="FitzGerald M."/>
            <person name="Gilbert J."/>
            <person name="Gibson R."/>
            <person name="Gnerre S."/>
            <person name="Goldstein S."/>
            <person name="Grafham D.V."/>
            <person name="Grocock R."/>
            <person name="Hafez N."/>
            <person name="Hagopian D.S."/>
            <person name="Hart E."/>
            <person name="Norman C.H."/>
            <person name="Humphray S."/>
            <person name="Jaffe D.B."/>
            <person name="Jones M."/>
            <person name="Kamal M."/>
            <person name="Khodiyar V.K."/>
            <person name="LaButti K."/>
            <person name="Laird G."/>
            <person name="Lehoczky J."/>
            <person name="Liu X."/>
            <person name="Lokyitsang T."/>
            <person name="Loveland J."/>
            <person name="Lui A."/>
            <person name="Macdonald P."/>
            <person name="Major J.E."/>
            <person name="Matthews L."/>
            <person name="Mauceli E."/>
            <person name="McCarroll S.A."/>
            <person name="Mihalev A.H."/>
            <person name="Mudge J."/>
            <person name="Nguyen C."/>
            <person name="Nicol R."/>
            <person name="O'Leary S.B."/>
            <person name="Osoegawa K."/>
            <person name="Schwartz D.C."/>
            <person name="Shaw-Smith C."/>
            <person name="Stankiewicz P."/>
            <person name="Steward C."/>
            <person name="Swarbreck D."/>
            <person name="Venkataraman V."/>
            <person name="Whittaker C.A."/>
            <person name="Yang X."/>
            <person name="Zimmer A.R."/>
            <person name="Bradley A."/>
            <person name="Hubbard T."/>
            <person name="Birren B.W."/>
            <person name="Rogers J."/>
            <person name="Lander E.S."/>
            <person name="Nusbaum C."/>
        </authorList>
    </citation>
    <scope>NUCLEOTIDE SEQUENCE [LARGE SCALE GENOMIC DNA]</scope>
</reference>
<reference key="3">
    <citation type="submission" date="2005-09" db="EMBL/GenBank/DDBJ databases">
        <authorList>
            <person name="Mural R.J."/>
            <person name="Istrail S."/>
            <person name="Sutton G.G."/>
            <person name="Florea L."/>
            <person name="Halpern A.L."/>
            <person name="Mobarry C.M."/>
            <person name="Lippert R."/>
            <person name="Walenz B."/>
            <person name="Shatkay H."/>
            <person name="Dew I."/>
            <person name="Miller J.R."/>
            <person name="Flanigan M.J."/>
            <person name="Edwards N.J."/>
            <person name="Bolanos R."/>
            <person name="Fasulo D."/>
            <person name="Halldorsson B.V."/>
            <person name="Hannenhalli S."/>
            <person name="Turner R."/>
            <person name="Yooseph S."/>
            <person name="Lu F."/>
            <person name="Nusskern D.R."/>
            <person name="Shue B.C."/>
            <person name="Zheng X.H."/>
            <person name="Zhong F."/>
            <person name="Delcher A.L."/>
            <person name="Huson D.H."/>
            <person name="Kravitz S.A."/>
            <person name="Mouchard L."/>
            <person name="Reinert K."/>
            <person name="Remington K.A."/>
            <person name="Clark A.G."/>
            <person name="Waterman M.S."/>
            <person name="Eichler E.E."/>
            <person name="Adams M.D."/>
            <person name="Hunkapiller M.W."/>
            <person name="Myers E.W."/>
            <person name="Venter J.C."/>
        </authorList>
    </citation>
    <scope>NUCLEOTIDE SEQUENCE [LARGE SCALE GENOMIC DNA]</scope>
</reference>
<reference key="4">
    <citation type="journal article" date="2004" name="Genome Res.">
        <title>The status, quality, and expansion of the NIH full-length cDNA project: the Mammalian Gene Collection (MGC).</title>
        <authorList>
            <consortium name="The MGC Project Team"/>
        </authorList>
    </citation>
    <scope>NUCLEOTIDE SEQUENCE [LARGE SCALE MRNA] (ISOFORMS 1 AND 2)</scope>
    <source>
        <tissue>Eye</tissue>
        <tissue>Lung</tissue>
    </source>
</reference>
<reference key="5">
    <citation type="journal article" date="2006" name="EMBO J.">
        <title>Timely anaphase onset requires a novel spindle and kinetochore complex comprising Ska1 and Ska2.</title>
        <authorList>
            <person name="Hanisch A."/>
            <person name="Sillje H.H.W."/>
            <person name="Nigg E.A."/>
        </authorList>
    </citation>
    <scope>FUNCTION</scope>
    <scope>SUBCELLULAR LOCATION</scope>
    <scope>INTERACTION WITH SKA1</scope>
</reference>
<reference key="6">
    <citation type="journal article" date="2008" name="J. Endocrinol.">
        <title>Identification and functional analysis of SKA2 interaction with the glucocorticoid receptor.</title>
        <authorList>
            <person name="Rice L."/>
            <person name="Waters C.E."/>
            <person name="Eccles J."/>
            <person name="Garside H."/>
            <person name="Sommer P."/>
            <person name="Kay P."/>
            <person name="Blackhall F.H."/>
            <person name="Zeef L."/>
            <person name="Telfer B."/>
            <person name="Stratford I."/>
            <person name="Clarke R."/>
            <person name="Singh D."/>
            <person name="Stevens A."/>
            <person name="White A."/>
            <person name="Ray D.W."/>
        </authorList>
    </citation>
    <scope>POSSIBLE INTERACTION WITH NR3C1</scope>
</reference>
<reference key="7">
    <citation type="journal article" date="2008" name="Mol. Cell">
        <title>Kinase-selective enrichment enables quantitative phosphoproteomics of the kinome across the cell cycle.</title>
        <authorList>
            <person name="Daub H."/>
            <person name="Olsen J.V."/>
            <person name="Bairlein M."/>
            <person name="Gnad F."/>
            <person name="Oppermann F.S."/>
            <person name="Korner R."/>
            <person name="Greff Z."/>
            <person name="Keri G."/>
            <person name="Stemmann O."/>
            <person name="Mann M."/>
        </authorList>
    </citation>
    <scope>PHOSPHORYLATION [LARGE SCALE ANALYSIS] AT SER-101</scope>
    <scope>IDENTIFICATION BY MASS SPECTROMETRY [LARGE SCALE ANALYSIS]</scope>
    <source>
        <tissue>Cervix carcinoma</tissue>
    </source>
</reference>
<reference key="8">
    <citation type="journal article" date="2009" name="Anal. Chem.">
        <title>Lys-N and trypsin cover complementary parts of the phosphoproteome in a refined SCX-based approach.</title>
        <authorList>
            <person name="Gauci S."/>
            <person name="Helbig A.O."/>
            <person name="Slijper M."/>
            <person name="Krijgsveld J."/>
            <person name="Heck A.J."/>
            <person name="Mohammed S."/>
        </authorList>
    </citation>
    <scope>IDENTIFICATION BY MASS SPECTROMETRY [LARGE SCALE ANALYSIS]</scope>
</reference>
<reference key="9">
    <citation type="journal article" date="2009" name="Dev. Cell">
        <title>The human kinetochore Ska1 complex facilitates microtubule depolymerization-coupled motility.</title>
        <authorList>
            <person name="Welburn J.P.I."/>
            <person name="Grishchuk E.L."/>
            <person name="Backer C.B."/>
            <person name="Wilson-Kubalek E.M."/>
            <person name="Yates J.R. III"/>
            <person name="Cheeseman I.M."/>
        </authorList>
    </citation>
    <scope>FUNCTION</scope>
    <scope>SUBCELLULAR LOCATION</scope>
    <scope>IDENTIFICATION IN THE SKA1 COMPLEX</scope>
    <scope>INTERACTION WITH MICROTUBULES AND SKA1</scope>
</reference>
<reference key="10">
    <citation type="journal article" date="2011" name="BMC Syst. Biol.">
        <title>Initial characterization of the human central proteome.</title>
        <authorList>
            <person name="Burkard T.R."/>
            <person name="Planyavsky M."/>
            <person name="Kaupe I."/>
            <person name="Breitwieser F.P."/>
            <person name="Buerckstuemmer T."/>
            <person name="Bennett K.L."/>
            <person name="Superti-Furga G."/>
            <person name="Colinge J."/>
        </authorList>
    </citation>
    <scope>IDENTIFICATION BY MASS SPECTROMETRY [LARGE SCALE ANALYSIS]</scope>
</reference>
<reference key="11">
    <citation type="journal article" date="2012" name="Dev. Cell">
        <title>The kinetochore-bound Ska1 complex tracks depolymerizing microtubules and binds to curved protofilaments.</title>
        <authorList>
            <person name="Schmidt J.C."/>
            <person name="Arthanari H."/>
            <person name="Boeszoermenyi A."/>
            <person name="Dashkevich N.M."/>
            <person name="Wilson-Kubalek E.M."/>
            <person name="Monnier N."/>
            <person name="Markus M."/>
            <person name="Oberer M."/>
            <person name="Milligan R.A."/>
            <person name="Bathe M."/>
            <person name="Wagner G."/>
            <person name="Grishchuk E.L."/>
            <person name="Cheeseman I.M."/>
        </authorList>
    </citation>
    <scope>FUNCTION</scope>
</reference>
<reference key="12">
    <citation type="journal article" date="2013" name="J. Proteome Res.">
        <title>Toward a comprehensive characterization of a human cancer cell phosphoproteome.</title>
        <authorList>
            <person name="Zhou H."/>
            <person name="Di Palma S."/>
            <person name="Preisinger C."/>
            <person name="Peng M."/>
            <person name="Polat A.N."/>
            <person name="Heck A.J."/>
            <person name="Mohammed S."/>
        </authorList>
    </citation>
    <scope>PHOSPHORYLATION [LARGE SCALE ANALYSIS] AT SER-101</scope>
    <scope>IDENTIFICATION BY MASS SPECTROMETRY [LARGE SCALE ANALYSIS]</scope>
    <source>
        <tissue>Cervix carcinoma</tissue>
        <tissue>Erythroleukemia</tissue>
    </source>
</reference>
<proteinExistence type="evidence at protein level"/>
<protein>
    <recommendedName>
        <fullName>Spindle and kinetochore-associated protein 2</fullName>
    </recommendedName>
    <alternativeName>
        <fullName>Protein FAM33A</fullName>
    </alternativeName>
</protein>
<accession>Q8WVK7</accession>
<accession>A6NIL3</accession>
<accession>B3KPL3</accession>
<accession>E9PCB8</accession>
<dbReference type="EMBL" id="AK056473">
    <property type="protein sequence ID" value="BAG51725.1"/>
    <property type="molecule type" value="mRNA"/>
</dbReference>
<dbReference type="EMBL" id="AC099850">
    <property type="status" value="NOT_ANNOTATED_CDS"/>
    <property type="molecule type" value="Genomic_DNA"/>
</dbReference>
<dbReference type="EMBL" id="CH471109">
    <property type="protein sequence ID" value="EAW94420.1"/>
    <property type="molecule type" value="Genomic_DNA"/>
</dbReference>
<dbReference type="EMBL" id="BC017873">
    <property type="protein sequence ID" value="AAH17873.1"/>
    <property type="molecule type" value="mRNA"/>
</dbReference>
<dbReference type="EMBL" id="BC106003">
    <property type="protein sequence ID" value="AAI06004.1"/>
    <property type="molecule type" value="mRNA"/>
</dbReference>
<dbReference type="EMBL" id="BI835364">
    <property type="status" value="NOT_ANNOTATED_CDS"/>
    <property type="molecule type" value="mRNA"/>
</dbReference>
<dbReference type="CCDS" id="CCDS45747.1">
    <molecule id="Q8WVK7-1"/>
</dbReference>
<dbReference type="CCDS" id="CCDS45748.1">
    <molecule id="Q8WVK7-2"/>
</dbReference>
<dbReference type="RefSeq" id="NP_001094065.1">
    <molecule id="Q8WVK7-2"/>
    <property type="nucleotide sequence ID" value="NM_001100595.2"/>
</dbReference>
<dbReference type="RefSeq" id="NP_872426.1">
    <molecule id="Q8WVK7-1"/>
    <property type="nucleotide sequence ID" value="NM_182620.4"/>
</dbReference>
<dbReference type="PDB" id="4AJ5">
    <property type="method" value="X-ray"/>
    <property type="resolution" value="3.32 A"/>
    <property type="chains" value="K/L/M/N/O/P/Q/R/S/T=1-121"/>
</dbReference>
<dbReference type="PDBsum" id="4AJ5"/>
<dbReference type="SMR" id="Q8WVK7"/>
<dbReference type="BioGRID" id="131515">
    <property type="interactions" value="36"/>
</dbReference>
<dbReference type="ComplexPortal" id="CPX-5642">
    <property type="entry name" value="Kinetochore SKA complex"/>
</dbReference>
<dbReference type="FunCoup" id="Q8WVK7">
    <property type="interactions" value="679"/>
</dbReference>
<dbReference type="IntAct" id="Q8WVK7">
    <property type="interactions" value="28"/>
</dbReference>
<dbReference type="MINT" id="Q8WVK7"/>
<dbReference type="STRING" id="9606.ENSP00000333433"/>
<dbReference type="iPTMnet" id="Q8WVK7"/>
<dbReference type="PhosphoSitePlus" id="Q8WVK7"/>
<dbReference type="BioMuta" id="SKA2"/>
<dbReference type="jPOST" id="Q8WVK7"/>
<dbReference type="MassIVE" id="Q8WVK7"/>
<dbReference type="PaxDb" id="9606-ENSP00000333433"/>
<dbReference type="PeptideAtlas" id="Q8WVK7"/>
<dbReference type="ProteomicsDB" id="19416"/>
<dbReference type="ProteomicsDB" id="74801">
    <molecule id="Q8WVK7-1"/>
</dbReference>
<dbReference type="Pumba" id="Q8WVK7"/>
<dbReference type="Antibodypedia" id="31070">
    <property type="antibodies" value="127 antibodies from 23 providers"/>
</dbReference>
<dbReference type="DNASU" id="348235"/>
<dbReference type="Ensembl" id="ENST00000330137.12">
    <molecule id="Q8WVK7-1"/>
    <property type="protein sequence ID" value="ENSP00000333433.7"/>
    <property type="gene ID" value="ENSG00000182628.13"/>
</dbReference>
<dbReference type="Ensembl" id="ENST00000437036.6">
    <molecule id="Q8WVK7-2"/>
    <property type="protein sequence ID" value="ENSP00000411231.2"/>
    <property type="gene ID" value="ENSG00000182628.13"/>
</dbReference>
<dbReference type="GeneID" id="348235"/>
<dbReference type="KEGG" id="hsa:348235"/>
<dbReference type="MANE-Select" id="ENST00000330137.12">
    <property type="protein sequence ID" value="ENSP00000333433.7"/>
    <property type="RefSeq nucleotide sequence ID" value="NM_182620.4"/>
    <property type="RefSeq protein sequence ID" value="NP_872426.1"/>
</dbReference>
<dbReference type="UCSC" id="uc002ixd.3">
    <molecule id="Q8WVK7-1"/>
    <property type="organism name" value="human"/>
</dbReference>
<dbReference type="AGR" id="HGNC:28006"/>
<dbReference type="CTD" id="348235"/>
<dbReference type="DisGeNET" id="348235"/>
<dbReference type="GeneCards" id="SKA2"/>
<dbReference type="HGNC" id="HGNC:28006">
    <property type="gene designation" value="SKA2"/>
</dbReference>
<dbReference type="HPA" id="ENSG00000182628">
    <property type="expression patterns" value="Low tissue specificity"/>
</dbReference>
<dbReference type="MIM" id="616674">
    <property type="type" value="gene"/>
</dbReference>
<dbReference type="neXtProt" id="NX_Q8WVK7"/>
<dbReference type="OpenTargets" id="ENSG00000182628"/>
<dbReference type="PharmGKB" id="PA165432792"/>
<dbReference type="VEuPathDB" id="HostDB:ENSG00000182628"/>
<dbReference type="eggNOG" id="ENOG502S6SM">
    <property type="taxonomic scope" value="Eukaryota"/>
</dbReference>
<dbReference type="GeneTree" id="ENSGT00390000009588"/>
<dbReference type="HOGENOM" id="CLU_143881_0_0_1"/>
<dbReference type="InParanoid" id="Q8WVK7"/>
<dbReference type="OMA" id="TNAQKES"/>
<dbReference type="OrthoDB" id="193920at2759"/>
<dbReference type="PAN-GO" id="Q8WVK7">
    <property type="GO annotations" value="5 GO annotations based on evolutionary models"/>
</dbReference>
<dbReference type="PhylomeDB" id="Q8WVK7"/>
<dbReference type="TreeFam" id="TF332958"/>
<dbReference type="PathwayCommons" id="Q8WVK7"/>
<dbReference type="Reactome" id="R-HSA-141444">
    <property type="pathway name" value="Amplification of signal from unattached kinetochores via a MAD2 inhibitory signal"/>
</dbReference>
<dbReference type="Reactome" id="R-HSA-2467813">
    <property type="pathway name" value="Separation of Sister Chromatids"/>
</dbReference>
<dbReference type="Reactome" id="R-HSA-2500257">
    <property type="pathway name" value="Resolution of Sister Chromatid Cohesion"/>
</dbReference>
<dbReference type="Reactome" id="R-HSA-5663220">
    <property type="pathway name" value="RHO GTPases Activate Formins"/>
</dbReference>
<dbReference type="Reactome" id="R-HSA-68877">
    <property type="pathway name" value="Mitotic Prometaphase"/>
</dbReference>
<dbReference type="Reactome" id="R-HSA-9648025">
    <property type="pathway name" value="EML4 and NUDC in mitotic spindle formation"/>
</dbReference>
<dbReference type="SignaLink" id="Q8WVK7"/>
<dbReference type="SIGNOR" id="Q8WVK7"/>
<dbReference type="BioGRID-ORCS" id="348235">
    <property type="hits" value="312 hits in 1167 CRISPR screens"/>
</dbReference>
<dbReference type="ChiTaRS" id="SKA2">
    <property type="organism name" value="human"/>
</dbReference>
<dbReference type="EvolutionaryTrace" id="Q8WVK7"/>
<dbReference type="GenomeRNAi" id="348235"/>
<dbReference type="Pharos" id="Q8WVK7">
    <property type="development level" value="Tbio"/>
</dbReference>
<dbReference type="PRO" id="PR:Q8WVK7"/>
<dbReference type="Proteomes" id="UP000005640">
    <property type="component" value="Chromosome 17"/>
</dbReference>
<dbReference type="RNAct" id="Q8WVK7">
    <property type="molecule type" value="protein"/>
</dbReference>
<dbReference type="Bgee" id="ENSG00000182628">
    <property type="expression patterns" value="Expressed in ventricular zone and 191 other cell types or tissues"/>
</dbReference>
<dbReference type="ExpressionAtlas" id="Q8WVK7">
    <property type="expression patterns" value="baseline and differential"/>
</dbReference>
<dbReference type="GO" id="GO:0005829">
    <property type="term" value="C:cytosol"/>
    <property type="evidence" value="ECO:0000304"/>
    <property type="project" value="Reactome"/>
</dbReference>
<dbReference type="GO" id="GO:0000776">
    <property type="term" value="C:kinetochore"/>
    <property type="evidence" value="ECO:0000353"/>
    <property type="project" value="ComplexPortal"/>
</dbReference>
<dbReference type="GO" id="GO:0072687">
    <property type="term" value="C:meiotic spindle"/>
    <property type="evidence" value="ECO:0007669"/>
    <property type="project" value="Ensembl"/>
</dbReference>
<dbReference type="GO" id="GO:0000940">
    <property type="term" value="C:outer kinetochore"/>
    <property type="evidence" value="ECO:0000314"/>
    <property type="project" value="UniProtKB"/>
</dbReference>
<dbReference type="GO" id="GO:0170027">
    <property type="term" value="C:SKA complex"/>
    <property type="evidence" value="ECO:0000314"/>
    <property type="project" value="UniProtKB"/>
</dbReference>
<dbReference type="GO" id="GO:0005876">
    <property type="term" value="C:spindle microtubule"/>
    <property type="evidence" value="ECO:0000314"/>
    <property type="project" value="UniProtKB"/>
</dbReference>
<dbReference type="GO" id="GO:0008017">
    <property type="term" value="F:microtubule binding"/>
    <property type="evidence" value="ECO:0000314"/>
    <property type="project" value="UniProtKB"/>
</dbReference>
<dbReference type="GO" id="GO:0051315">
    <property type="term" value="P:attachment of mitotic spindle microtubules to kinetochore"/>
    <property type="evidence" value="ECO:0000314"/>
    <property type="project" value="UniProtKB"/>
</dbReference>
<dbReference type="GO" id="GO:0051301">
    <property type="term" value="P:cell division"/>
    <property type="evidence" value="ECO:0007669"/>
    <property type="project" value="UniProtKB-KW"/>
</dbReference>
<dbReference type="GO" id="GO:0007059">
    <property type="term" value="P:chromosome segregation"/>
    <property type="evidence" value="ECO:0000318"/>
    <property type="project" value="GO_Central"/>
</dbReference>
<dbReference type="GO" id="GO:0051296">
    <property type="term" value="P:establishment of meiotic spindle orientation"/>
    <property type="evidence" value="ECO:0000250"/>
    <property type="project" value="UniProtKB"/>
</dbReference>
<dbReference type="GO" id="GO:0000278">
    <property type="term" value="P:mitotic cell cycle"/>
    <property type="evidence" value="ECO:0000318"/>
    <property type="project" value="GO_Central"/>
</dbReference>
<dbReference type="GO" id="GO:0007080">
    <property type="term" value="P:mitotic metaphase chromosome alignment"/>
    <property type="evidence" value="ECO:0000353"/>
    <property type="project" value="UniProtKB"/>
</dbReference>
<dbReference type="GO" id="GO:0000070">
    <property type="term" value="P:mitotic sister chromatid segregation"/>
    <property type="evidence" value="ECO:0000315"/>
    <property type="project" value="UniProtKB"/>
</dbReference>
<dbReference type="GO" id="GO:0031110">
    <property type="term" value="P:regulation of microtubule polymerization or depolymerization"/>
    <property type="evidence" value="ECO:0000314"/>
    <property type="project" value="UniProtKB"/>
</dbReference>
<dbReference type="GO" id="GO:0007056">
    <property type="term" value="P:spindle assembly involved in female meiosis"/>
    <property type="evidence" value="ECO:0000250"/>
    <property type="project" value="UniProtKB"/>
</dbReference>
<dbReference type="CDD" id="cd12955">
    <property type="entry name" value="SKA2"/>
    <property type="match status" value="1"/>
</dbReference>
<dbReference type="Gene3D" id="6.10.250.1380">
    <property type="match status" value="1"/>
</dbReference>
<dbReference type="InterPro" id="IPR026762">
    <property type="entry name" value="Ska2"/>
</dbReference>
<dbReference type="InterPro" id="IPR042091">
    <property type="entry name" value="Ska2_N"/>
</dbReference>
<dbReference type="PANTHER" id="PTHR32017">
    <property type="entry name" value="SPINDLE AND KINETOCHORE-ASSOCIATED PROTEIN 2"/>
    <property type="match status" value="1"/>
</dbReference>
<dbReference type="PANTHER" id="PTHR32017:SF3">
    <property type="entry name" value="SPINDLE AND KINETOCHORE-ASSOCIATED PROTEIN 2"/>
    <property type="match status" value="1"/>
</dbReference>
<dbReference type="Pfam" id="PF16740">
    <property type="entry name" value="SKA2"/>
    <property type="match status" value="1"/>
</dbReference>
<name>SKA2_HUMAN</name>
<feature type="chain" id="PRO_0000266035" description="Spindle and kinetochore-associated protein 2">
    <location>
        <begin position="1"/>
        <end position="121"/>
    </location>
</feature>
<feature type="modified residue" description="Phosphoserine" evidence="6 7">
    <location>
        <position position="101"/>
    </location>
</feature>
<feature type="splice variant" id="VSP_047348" description="In isoform 2." evidence="4">
    <original>MEAEVDKLELMFQKAESDLDYIQYRLEYEIKTNHPDSASEKNPVTLLKELSVIKSRYQTLYARFKPVAVEQKESK</original>
    <variation>MASEVGHNLESPETPGGGGWTRVEFPPPAPKGAATVWCLNRLGSRKLSLIWITFNTGWNMKSRLIILIQQVSCHH</variation>
    <location>
        <begin position="1"/>
        <end position="75"/>
    </location>
</feature>
<feature type="splice variant" id="VSP_047349" description="In isoform 2." evidence="4">
    <location>
        <begin position="76"/>
        <end position="121"/>
    </location>
</feature>
<feature type="helix" evidence="8">
    <location>
        <begin position="2"/>
        <end position="32"/>
    </location>
</feature>
<feature type="helix" evidence="8">
    <location>
        <begin position="44"/>
        <end position="96"/>
    </location>
</feature>
<feature type="helix" evidence="8">
    <location>
        <begin position="104"/>
        <end position="112"/>
    </location>
</feature>
<comment type="function">
    <text evidence="1 2 3">Component of the SKA1 complex, a microtubule-binding subcomplex of the outer kinetochore that is essential for proper chromosome segregation (PubMed:17093495, PubMed:19289083, PubMed:23085020). Required for timely anaphase onset during mitosis, when chromosomes undergo bipolar attachment on spindle microtubules leading to silencing of the spindle checkpoint (PubMed:17093495). The SKA1 complex is a direct component of the kinetochore-microtubule interface and directly associates with microtubules as oligomeric assemblies (PubMed:19289083). The complex facilitates the processive movement of microspheres along a microtubule in a depolymerization-coupled manner (PubMed:17093495, PubMed:19289083). In the complex, it is required for SKA1 localization (PubMed:19289083). Affinity for microtubules is synergistically enhanced in the presence of the ndc-80 complex and may allow the ndc-80 complex to track depolymerizing microtubules (PubMed:23085020).</text>
</comment>
<comment type="subunit">
    <text evidence="1 2">Component of the SKA1 complex, composed of SKA1, SKA2 and SKA3. Forms a heterodimer with SKA1; the heterodimer interacting with SKA3. The core SKA1 complex is composed of 2 SKA1-SKA2 heterodimers, each heterodimer interacting with a molecule of the SKA3 homodimer. The core SKA1 complex associates with microtubules and forms oligomeric assemblies. Interacts directly with SKA1. Binds directly to microtubules; but with a much lower affinity than SKA1. May interact with NR3C1; the relevance of such interaction remains unclear in vivo.</text>
</comment>
<comment type="interaction">
    <interactant intactId="EBI-1773994">
        <id>Q8WVK7</id>
    </interactant>
    <interactant intactId="EBI-725672">
        <id>Q9NWB7</id>
        <label>IFT57</label>
    </interactant>
    <organismsDiffer>false</organismsDiffer>
    <experiments>3</experiments>
</comment>
<comment type="interaction">
    <interactant intactId="EBI-1773994">
        <id>Q8WVK7</id>
    </interactant>
    <interactant intactId="EBI-9512693">
        <id>Q53GL6</id>
        <label>RALY</label>
    </interactant>
    <organismsDiffer>false</organismsDiffer>
    <experiments>3</experiments>
</comment>
<comment type="interaction">
    <interactant intactId="EBI-1773994">
        <id>Q8WVK7</id>
    </interactant>
    <interactant intactId="EBI-741854">
        <id>Q96BD8</id>
        <label>SKA1</label>
    </interactant>
    <organismsDiffer>false</organismsDiffer>
    <experiments>14</experiments>
</comment>
<comment type="subcellular location">
    <subcellularLocation>
        <location evidence="1 2">Cytoplasm</location>
        <location evidence="1 2">Cytoskeleton</location>
        <location evidence="1 2">Spindle</location>
    </subcellularLocation>
    <subcellularLocation>
        <location evidence="1 2">Chromosome</location>
        <location evidence="1 2">Centromere</location>
        <location evidence="1 2">Kinetochore</location>
    </subcellularLocation>
    <text evidence="1 2">Localizes to the outer kinetochore and spindle microtubules during mitosis in a NDC80 complex-dependent manner. Localizes to both the mitotic spindle and kinetochore-associated proteins.</text>
</comment>
<comment type="alternative products">
    <event type="alternative splicing"/>
    <isoform>
        <id>Q8WVK7-1</id>
        <name>1</name>
        <sequence type="displayed"/>
    </isoform>
    <isoform>
        <id>Q8WVK7-2</id>
        <name>2</name>
        <sequence type="described" ref="VSP_047348 VSP_047349"/>
    </isoform>
</comment>
<comment type="similarity">
    <text evidence="5">Belongs to the SKA2 family.</text>
</comment>